<proteinExistence type="inferred from homology"/>
<accession>A3D480</accession>
<keyword id="KW-0963">Cytoplasm</keyword>
<keyword id="KW-0227">DNA damage</keyword>
<keyword id="KW-0233">DNA recombination</keyword>
<keyword id="KW-0234">DNA repair</keyword>
<keyword id="KW-0238">DNA-binding</keyword>
<keyword id="KW-1185">Reference proteome</keyword>
<name>RUVA_SHEB5</name>
<feature type="chain" id="PRO_1000002546" description="Holliday junction branch migration complex subunit RuvA">
    <location>
        <begin position="1"/>
        <end position="205"/>
    </location>
</feature>
<feature type="region of interest" description="Domain I" evidence="1">
    <location>
        <begin position="1"/>
        <end position="64"/>
    </location>
</feature>
<feature type="region of interest" description="Domain II" evidence="1">
    <location>
        <begin position="65"/>
        <end position="143"/>
    </location>
</feature>
<feature type="region of interest" description="Flexible linker" evidence="1">
    <location>
        <begin position="144"/>
        <end position="156"/>
    </location>
</feature>
<feature type="region of interest" description="Domain III" evidence="1">
    <location>
        <begin position="157"/>
        <end position="205"/>
    </location>
</feature>
<gene>
    <name evidence="1" type="primary">ruvA</name>
    <name type="ordered locus">Sbal_2041</name>
</gene>
<sequence length="205" mass="22483">MIGRLRGVLVEKQAPEILIDVNGVGYELQMPLTSFYELPEVNHETMVYTHFVVREDAQLLYGFITKQERALFRLLIKTNGVGPKLALTILSGMTAGEFVGCVERDDIVTLVKLPGVGKKTAERLLVEMRDKLKSLMEASAGSEREFVLQSNYSPAPTVNSAEEDAISALISLGYKPPQASKSVSAAYKEGMDSETLIKAALKSML</sequence>
<protein>
    <recommendedName>
        <fullName evidence="1">Holliday junction branch migration complex subunit RuvA</fullName>
    </recommendedName>
</protein>
<comment type="function">
    <text evidence="1">The RuvA-RuvB-RuvC complex processes Holliday junction (HJ) DNA during genetic recombination and DNA repair, while the RuvA-RuvB complex plays an important role in the rescue of blocked DNA replication forks via replication fork reversal (RFR). RuvA specifically binds to HJ cruciform DNA, conferring on it an open structure. The RuvB hexamer acts as an ATP-dependent pump, pulling dsDNA into and through the RuvAB complex. HJ branch migration allows RuvC to scan DNA until it finds its consensus sequence, where it cleaves and resolves the cruciform DNA.</text>
</comment>
<comment type="subunit">
    <text evidence="1">Homotetramer. Forms an RuvA(8)-RuvB(12)-Holliday junction (HJ) complex. HJ DNA is sandwiched between 2 RuvA tetramers; dsDNA enters through RuvA and exits via RuvB. An RuvB hexamer assembles on each DNA strand where it exits the tetramer. Each RuvB hexamer is contacted by two RuvA subunits (via domain III) on 2 adjacent RuvB subunits; this complex drives branch migration. In the full resolvosome a probable DNA-RuvA(4)-RuvB(12)-RuvC(2) complex forms which resolves the HJ.</text>
</comment>
<comment type="subcellular location">
    <subcellularLocation>
        <location evidence="1">Cytoplasm</location>
    </subcellularLocation>
</comment>
<comment type="domain">
    <text evidence="1">Has three domains with a flexible linker between the domains II and III and assumes an 'L' shape. Domain III is highly mobile and contacts RuvB.</text>
</comment>
<comment type="similarity">
    <text evidence="1">Belongs to the RuvA family.</text>
</comment>
<reference key="1">
    <citation type="submission" date="2007-02" db="EMBL/GenBank/DDBJ databases">
        <title>Complete sequence of chromosome of Shewanella baltica OS155.</title>
        <authorList>
            <consortium name="US DOE Joint Genome Institute"/>
            <person name="Copeland A."/>
            <person name="Lucas S."/>
            <person name="Lapidus A."/>
            <person name="Barry K."/>
            <person name="Detter J.C."/>
            <person name="Glavina del Rio T."/>
            <person name="Hammon N."/>
            <person name="Israni S."/>
            <person name="Dalin E."/>
            <person name="Tice H."/>
            <person name="Pitluck S."/>
            <person name="Sims D.R."/>
            <person name="Brettin T."/>
            <person name="Bruce D."/>
            <person name="Han C."/>
            <person name="Tapia R."/>
            <person name="Brainard J."/>
            <person name="Schmutz J."/>
            <person name="Larimer F."/>
            <person name="Land M."/>
            <person name="Hauser L."/>
            <person name="Kyrpides N."/>
            <person name="Mikhailova N."/>
            <person name="Brettar I."/>
            <person name="Klappenbach J."/>
            <person name="Konstantinidis K."/>
            <person name="Rodrigues J."/>
            <person name="Tiedje J."/>
            <person name="Richardson P."/>
        </authorList>
    </citation>
    <scope>NUCLEOTIDE SEQUENCE [LARGE SCALE GENOMIC DNA]</scope>
    <source>
        <strain>OS155 / ATCC BAA-1091</strain>
    </source>
</reference>
<evidence type="ECO:0000255" key="1">
    <source>
        <dbReference type="HAMAP-Rule" id="MF_00031"/>
    </source>
</evidence>
<dbReference type="EMBL" id="CP000563">
    <property type="protein sequence ID" value="ABN61543.1"/>
    <property type="molecule type" value="Genomic_DNA"/>
</dbReference>
<dbReference type="RefSeq" id="WP_006081742.1">
    <property type="nucleotide sequence ID" value="NC_009052.1"/>
</dbReference>
<dbReference type="SMR" id="A3D480"/>
<dbReference type="STRING" id="325240.Sbal_2041"/>
<dbReference type="GeneID" id="11772537"/>
<dbReference type="KEGG" id="sbl:Sbal_2041"/>
<dbReference type="HOGENOM" id="CLU_087936_0_0_6"/>
<dbReference type="OrthoDB" id="5293449at2"/>
<dbReference type="Proteomes" id="UP000001557">
    <property type="component" value="Chromosome"/>
</dbReference>
<dbReference type="GO" id="GO:0005737">
    <property type="term" value="C:cytoplasm"/>
    <property type="evidence" value="ECO:0007669"/>
    <property type="project" value="UniProtKB-SubCell"/>
</dbReference>
<dbReference type="GO" id="GO:0009379">
    <property type="term" value="C:Holliday junction helicase complex"/>
    <property type="evidence" value="ECO:0007669"/>
    <property type="project" value="InterPro"/>
</dbReference>
<dbReference type="GO" id="GO:0048476">
    <property type="term" value="C:Holliday junction resolvase complex"/>
    <property type="evidence" value="ECO:0007669"/>
    <property type="project" value="UniProtKB-UniRule"/>
</dbReference>
<dbReference type="GO" id="GO:0005524">
    <property type="term" value="F:ATP binding"/>
    <property type="evidence" value="ECO:0007669"/>
    <property type="project" value="InterPro"/>
</dbReference>
<dbReference type="GO" id="GO:0000400">
    <property type="term" value="F:four-way junction DNA binding"/>
    <property type="evidence" value="ECO:0007669"/>
    <property type="project" value="UniProtKB-UniRule"/>
</dbReference>
<dbReference type="GO" id="GO:0009378">
    <property type="term" value="F:four-way junction helicase activity"/>
    <property type="evidence" value="ECO:0007669"/>
    <property type="project" value="InterPro"/>
</dbReference>
<dbReference type="GO" id="GO:0006310">
    <property type="term" value="P:DNA recombination"/>
    <property type="evidence" value="ECO:0007669"/>
    <property type="project" value="UniProtKB-UniRule"/>
</dbReference>
<dbReference type="GO" id="GO:0006281">
    <property type="term" value="P:DNA repair"/>
    <property type="evidence" value="ECO:0007669"/>
    <property type="project" value="UniProtKB-UniRule"/>
</dbReference>
<dbReference type="CDD" id="cd14332">
    <property type="entry name" value="UBA_RuvA_C"/>
    <property type="match status" value="1"/>
</dbReference>
<dbReference type="Gene3D" id="1.10.150.20">
    <property type="entry name" value="5' to 3' exonuclease, C-terminal subdomain"/>
    <property type="match status" value="1"/>
</dbReference>
<dbReference type="Gene3D" id="1.10.8.10">
    <property type="entry name" value="DNA helicase RuvA subunit, C-terminal domain"/>
    <property type="match status" value="1"/>
</dbReference>
<dbReference type="Gene3D" id="2.40.50.140">
    <property type="entry name" value="Nucleic acid-binding proteins"/>
    <property type="match status" value="1"/>
</dbReference>
<dbReference type="HAMAP" id="MF_00031">
    <property type="entry name" value="DNA_HJ_migration_RuvA"/>
    <property type="match status" value="1"/>
</dbReference>
<dbReference type="InterPro" id="IPR013849">
    <property type="entry name" value="DNA_helicase_Holl-junc_RuvA_I"/>
</dbReference>
<dbReference type="InterPro" id="IPR003583">
    <property type="entry name" value="Hlx-hairpin-Hlx_DNA-bd_motif"/>
</dbReference>
<dbReference type="InterPro" id="IPR012340">
    <property type="entry name" value="NA-bd_OB-fold"/>
</dbReference>
<dbReference type="InterPro" id="IPR000085">
    <property type="entry name" value="RuvA"/>
</dbReference>
<dbReference type="InterPro" id="IPR010994">
    <property type="entry name" value="RuvA_2-like"/>
</dbReference>
<dbReference type="InterPro" id="IPR011114">
    <property type="entry name" value="RuvA_C"/>
</dbReference>
<dbReference type="InterPro" id="IPR036267">
    <property type="entry name" value="RuvA_C_sf"/>
</dbReference>
<dbReference type="NCBIfam" id="TIGR00084">
    <property type="entry name" value="ruvA"/>
    <property type="match status" value="1"/>
</dbReference>
<dbReference type="Pfam" id="PF14520">
    <property type="entry name" value="HHH_5"/>
    <property type="match status" value="1"/>
</dbReference>
<dbReference type="Pfam" id="PF07499">
    <property type="entry name" value="RuvA_C"/>
    <property type="match status" value="1"/>
</dbReference>
<dbReference type="Pfam" id="PF01330">
    <property type="entry name" value="RuvA_N"/>
    <property type="match status" value="1"/>
</dbReference>
<dbReference type="SMART" id="SM00278">
    <property type="entry name" value="HhH1"/>
    <property type="match status" value="2"/>
</dbReference>
<dbReference type="SUPFAM" id="SSF46929">
    <property type="entry name" value="DNA helicase RuvA subunit, C-terminal domain"/>
    <property type="match status" value="1"/>
</dbReference>
<dbReference type="SUPFAM" id="SSF50249">
    <property type="entry name" value="Nucleic acid-binding proteins"/>
    <property type="match status" value="1"/>
</dbReference>
<dbReference type="SUPFAM" id="SSF47781">
    <property type="entry name" value="RuvA domain 2-like"/>
    <property type="match status" value="1"/>
</dbReference>
<organism>
    <name type="scientific">Shewanella baltica (strain OS155 / ATCC BAA-1091)</name>
    <dbReference type="NCBI Taxonomy" id="325240"/>
    <lineage>
        <taxon>Bacteria</taxon>
        <taxon>Pseudomonadati</taxon>
        <taxon>Pseudomonadota</taxon>
        <taxon>Gammaproteobacteria</taxon>
        <taxon>Alteromonadales</taxon>
        <taxon>Shewanellaceae</taxon>
        <taxon>Shewanella</taxon>
    </lineage>
</organism>